<sequence length="456" mass="48738">MLNVVILAAGLGKRMQSDLPKVLHSLAGKPMLEHVLDSASQLEPGRIVVVVGHGADRVRGAYEGRAGLSFALQQPQQGTGHAVQQAVPLLQEDGKDDVTLVLYGDVPLVQPDTLRRLLQARGQGAAVLTELLDDATGYGRIVRNEQGQVQRIVEHKDASEAERAIREVNTGILAAPTGRLKDWLSRIDNNNAQGEYYLTDVVGLAVADGVPVGAAQPSAGWETLGVNSRVQQAELERRWQQEQARRQLEAGVTLADPARFDVRGTLTCGRDVFIDVGCVFEGKVELADGVRVGPHCVLRDVSVGAGTHIDAYSHVQQATVGRDARIGPYARLRPGASLGDRTHVGNFVEIKNSVLDADSKANHLAYIGDADIGARVNVGAGTITCNYDGANKHRTIIEDDAFIGSDTQLVAPVRVGRGATLGAGTTLTRDAPAGQLTVSRARQTTIEGWQRPQKKS</sequence>
<gene>
    <name evidence="1" type="primary">glmU</name>
    <name type="ordered locus">Bpet0181</name>
</gene>
<feature type="chain" id="PRO_1000186408" description="Bifunctional protein GlmU">
    <location>
        <begin position="1"/>
        <end position="456"/>
    </location>
</feature>
<feature type="region of interest" description="Pyrophosphorylase" evidence="1">
    <location>
        <begin position="1"/>
        <end position="229"/>
    </location>
</feature>
<feature type="region of interest" description="Linker" evidence="1">
    <location>
        <begin position="230"/>
        <end position="250"/>
    </location>
</feature>
<feature type="region of interest" description="N-acetyltransferase" evidence="1">
    <location>
        <begin position="251"/>
        <end position="456"/>
    </location>
</feature>
<feature type="active site" description="Proton acceptor" evidence="1">
    <location>
        <position position="363"/>
    </location>
</feature>
<feature type="binding site" evidence="1">
    <location>
        <begin position="7"/>
        <end position="10"/>
    </location>
    <ligand>
        <name>UDP-N-acetyl-alpha-D-glucosamine</name>
        <dbReference type="ChEBI" id="CHEBI:57705"/>
    </ligand>
</feature>
<feature type="binding site" evidence="1">
    <location>
        <position position="21"/>
    </location>
    <ligand>
        <name>UDP-N-acetyl-alpha-D-glucosamine</name>
        <dbReference type="ChEBI" id="CHEBI:57705"/>
    </ligand>
</feature>
<feature type="binding site" evidence="1">
    <location>
        <position position="73"/>
    </location>
    <ligand>
        <name>UDP-N-acetyl-alpha-D-glucosamine</name>
        <dbReference type="ChEBI" id="CHEBI:57705"/>
    </ligand>
</feature>
<feature type="binding site" evidence="1">
    <location>
        <begin position="78"/>
        <end position="79"/>
    </location>
    <ligand>
        <name>UDP-N-acetyl-alpha-D-glucosamine</name>
        <dbReference type="ChEBI" id="CHEBI:57705"/>
    </ligand>
</feature>
<feature type="binding site" evidence="1">
    <location>
        <begin position="103"/>
        <end position="105"/>
    </location>
    <ligand>
        <name>UDP-N-acetyl-alpha-D-glucosamine</name>
        <dbReference type="ChEBI" id="CHEBI:57705"/>
    </ligand>
</feature>
<feature type="binding site" evidence="1">
    <location>
        <position position="105"/>
    </location>
    <ligand>
        <name>Mg(2+)</name>
        <dbReference type="ChEBI" id="CHEBI:18420"/>
    </ligand>
</feature>
<feature type="binding site" evidence="1">
    <location>
        <position position="139"/>
    </location>
    <ligand>
        <name>UDP-N-acetyl-alpha-D-glucosamine</name>
        <dbReference type="ChEBI" id="CHEBI:57705"/>
    </ligand>
</feature>
<feature type="binding site" evidence="1">
    <location>
        <position position="154"/>
    </location>
    <ligand>
        <name>UDP-N-acetyl-alpha-D-glucosamine</name>
        <dbReference type="ChEBI" id="CHEBI:57705"/>
    </ligand>
</feature>
<feature type="binding site" evidence="1">
    <location>
        <position position="169"/>
    </location>
    <ligand>
        <name>UDP-N-acetyl-alpha-D-glucosamine</name>
        <dbReference type="ChEBI" id="CHEBI:57705"/>
    </ligand>
</feature>
<feature type="binding site" evidence="1">
    <location>
        <position position="227"/>
    </location>
    <ligand>
        <name>Mg(2+)</name>
        <dbReference type="ChEBI" id="CHEBI:18420"/>
    </ligand>
</feature>
<feature type="binding site" evidence="1">
    <location>
        <position position="227"/>
    </location>
    <ligand>
        <name>UDP-N-acetyl-alpha-D-glucosamine</name>
        <dbReference type="ChEBI" id="CHEBI:57705"/>
    </ligand>
</feature>
<feature type="binding site" evidence="1">
    <location>
        <position position="333"/>
    </location>
    <ligand>
        <name>UDP-N-acetyl-alpha-D-glucosamine</name>
        <dbReference type="ChEBI" id="CHEBI:57705"/>
    </ligand>
</feature>
<feature type="binding site" evidence="1">
    <location>
        <position position="351"/>
    </location>
    <ligand>
        <name>UDP-N-acetyl-alpha-D-glucosamine</name>
        <dbReference type="ChEBI" id="CHEBI:57705"/>
    </ligand>
</feature>
<feature type="binding site" evidence="1">
    <location>
        <position position="366"/>
    </location>
    <ligand>
        <name>UDP-N-acetyl-alpha-D-glucosamine</name>
        <dbReference type="ChEBI" id="CHEBI:57705"/>
    </ligand>
</feature>
<feature type="binding site" evidence="1">
    <location>
        <position position="377"/>
    </location>
    <ligand>
        <name>UDP-N-acetyl-alpha-D-glucosamine</name>
        <dbReference type="ChEBI" id="CHEBI:57705"/>
    </ligand>
</feature>
<feature type="binding site" evidence="1">
    <location>
        <position position="380"/>
    </location>
    <ligand>
        <name>acetyl-CoA</name>
        <dbReference type="ChEBI" id="CHEBI:57288"/>
    </ligand>
</feature>
<feature type="binding site" evidence="1">
    <location>
        <begin position="386"/>
        <end position="387"/>
    </location>
    <ligand>
        <name>acetyl-CoA</name>
        <dbReference type="ChEBI" id="CHEBI:57288"/>
    </ligand>
</feature>
<feature type="binding site" evidence="1">
    <location>
        <position position="405"/>
    </location>
    <ligand>
        <name>acetyl-CoA</name>
        <dbReference type="ChEBI" id="CHEBI:57288"/>
    </ligand>
</feature>
<feature type="binding site" evidence="1">
    <location>
        <position position="423"/>
    </location>
    <ligand>
        <name>acetyl-CoA</name>
        <dbReference type="ChEBI" id="CHEBI:57288"/>
    </ligand>
</feature>
<feature type="binding site" evidence="1">
    <location>
        <position position="440"/>
    </location>
    <ligand>
        <name>acetyl-CoA</name>
        <dbReference type="ChEBI" id="CHEBI:57288"/>
    </ligand>
</feature>
<accession>A9HWM1</accession>
<keyword id="KW-0012">Acyltransferase</keyword>
<keyword id="KW-0133">Cell shape</keyword>
<keyword id="KW-0961">Cell wall biogenesis/degradation</keyword>
<keyword id="KW-0963">Cytoplasm</keyword>
<keyword id="KW-0460">Magnesium</keyword>
<keyword id="KW-0479">Metal-binding</keyword>
<keyword id="KW-0511">Multifunctional enzyme</keyword>
<keyword id="KW-0548">Nucleotidyltransferase</keyword>
<keyword id="KW-0573">Peptidoglycan synthesis</keyword>
<keyword id="KW-0677">Repeat</keyword>
<keyword id="KW-0808">Transferase</keyword>
<proteinExistence type="inferred from homology"/>
<organism>
    <name type="scientific">Bordetella petrii (strain ATCC BAA-461 / DSM 12804 / CCUG 43448)</name>
    <dbReference type="NCBI Taxonomy" id="340100"/>
    <lineage>
        <taxon>Bacteria</taxon>
        <taxon>Pseudomonadati</taxon>
        <taxon>Pseudomonadota</taxon>
        <taxon>Betaproteobacteria</taxon>
        <taxon>Burkholderiales</taxon>
        <taxon>Alcaligenaceae</taxon>
        <taxon>Bordetella</taxon>
    </lineage>
</organism>
<comment type="function">
    <text evidence="1">Catalyzes the last two sequential reactions in the de novo biosynthetic pathway for UDP-N-acetylglucosamine (UDP-GlcNAc). The C-terminal domain catalyzes the transfer of acetyl group from acetyl coenzyme A to glucosamine-1-phosphate (GlcN-1-P) to produce N-acetylglucosamine-1-phosphate (GlcNAc-1-P), which is converted into UDP-GlcNAc by the transfer of uridine 5-monophosphate (from uridine 5-triphosphate), a reaction catalyzed by the N-terminal domain.</text>
</comment>
<comment type="catalytic activity">
    <reaction evidence="1">
        <text>alpha-D-glucosamine 1-phosphate + acetyl-CoA = N-acetyl-alpha-D-glucosamine 1-phosphate + CoA + H(+)</text>
        <dbReference type="Rhea" id="RHEA:13725"/>
        <dbReference type="ChEBI" id="CHEBI:15378"/>
        <dbReference type="ChEBI" id="CHEBI:57287"/>
        <dbReference type="ChEBI" id="CHEBI:57288"/>
        <dbReference type="ChEBI" id="CHEBI:57776"/>
        <dbReference type="ChEBI" id="CHEBI:58516"/>
        <dbReference type="EC" id="2.3.1.157"/>
    </reaction>
</comment>
<comment type="catalytic activity">
    <reaction evidence="1">
        <text>N-acetyl-alpha-D-glucosamine 1-phosphate + UTP + H(+) = UDP-N-acetyl-alpha-D-glucosamine + diphosphate</text>
        <dbReference type="Rhea" id="RHEA:13509"/>
        <dbReference type="ChEBI" id="CHEBI:15378"/>
        <dbReference type="ChEBI" id="CHEBI:33019"/>
        <dbReference type="ChEBI" id="CHEBI:46398"/>
        <dbReference type="ChEBI" id="CHEBI:57705"/>
        <dbReference type="ChEBI" id="CHEBI:57776"/>
        <dbReference type="EC" id="2.7.7.23"/>
    </reaction>
</comment>
<comment type="cofactor">
    <cofactor evidence="1">
        <name>Mg(2+)</name>
        <dbReference type="ChEBI" id="CHEBI:18420"/>
    </cofactor>
    <text evidence="1">Binds 1 Mg(2+) ion per subunit.</text>
</comment>
<comment type="pathway">
    <text evidence="1">Nucleotide-sugar biosynthesis; UDP-N-acetyl-alpha-D-glucosamine biosynthesis; N-acetyl-alpha-D-glucosamine 1-phosphate from alpha-D-glucosamine 6-phosphate (route II): step 2/2.</text>
</comment>
<comment type="pathway">
    <text evidence="1">Nucleotide-sugar biosynthesis; UDP-N-acetyl-alpha-D-glucosamine biosynthesis; UDP-N-acetyl-alpha-D-glucosamine from N-acetyl-alpha-D-glucosamine 1-phosphate: step 1/1.</text>
</comment>
<comment type="pathway">
    <text evidence="1">Bacterial outer membrane biogenesis; LPS lipid A biosynthesis.</text>
</comment>
<comment type="subunit">
    <text evidence="1">Homotrimer.</text>
</comment>
<comment type="subcellular location">
    <subcellularLocation>
        <location evidence="1">Cytoplasm</location>
    </subcellularLocation>
</comment>
<comment type="similarity">
    <text evidence="1">In the N-terminal section; belongs to the N-acetylglucosamine-1-phosphate uridyltransferase family.</text>
</comment>
<comment type="similarity">
    <text evidence="1">In the C-terminal section; belongs to the transferase hexapeptide repeat family.</text>
</comment>
<evidence type="ECO:0000255" key="1">
    <source>
        <dbReference type="HAMAP-Rule" id="MF_01631"/>
    </source>
</evidence>
<reference key="1">
    <citation type="journal article" date="2008" name="BMC Genomics">
        <title>The missing link: Bordetella petrii is endowed with both the metabolic versatility of environmental bacteria and virulence traits of pathogenic Bordetellae.</title>
        <authorList>
            <person name="Gross R."/>
            <person name="Guzman C.A."/>
            <person name="Sebaihia M."/>
            <person name="Martin dos Santos V.A.P."/>
            <person name="Pieper D.H."/>
            <person name="Koebnik R."/>
            <person name="Lechner M."/>
            <person name="Bartels D."/>
            <person name="Buhrmester J."/>
            <person name="Choudhuri J.V."/>
            <person name="Ebensen T."/>
            <person name="Gaigalat L."/>
            <person name="Herrmann S."/>
            <person name="Khachane A.N."/>
            <person name="Larisch C."/>
            <person name="Link S."/>
            <person name="Linke B."/>
            <person name="Meyer F."/>
            <person name="Mormann S."/>
            <person name="Nakunst D."/>
            <person name="Rueckert C."/>
            <person name="Schneiker-Bekel S."/>
            <person name="Schulze K."/>
            <person name="Voerholter F.-J."/>
            <person name="Yevsa T."/>
            <person name="Engle J.T."/>
            <person name="Goldman W.E."/>
            <person name="Puehler A."/>
            <person name="Goebel U.B."/>
            <person name="Goesmann A."/>
            <person name="Bloecker H."/>
            <person name="Kaiser O."/>
            <person name="Martinez-Arias R."/>
        </authorList>
    </citation>
    <scope>NUCLEOTIDE SEQUENCE [LARGE SCALE GENOMIC DNA]</scope>
    <source>
        <strain>ATCC BAA-461 / DSM 12804 / CCUG 43448</strain>
    </source>
</reference>
<dbReference type="EC" id="2.7.7.23" evidence="1"/>
<dbReference type="EC" id="2.3.1.157" evidence="1"/>
<dbReference type="EMBL" id="AM902716">
    <property type="protein sequence ID" value="CAP40512.1"/>
    <property type="molecule type" value="Genomic_DNA"/>
</dbReference>
<dbReference type="SMR" id="A9HWM1"/>
<dbReference type="STRING" id="94624.Bpet0181"/>
<dbReference type="KEGG" id="bpt:Bpet0181"/>
<dbReference type="eggNOG" id="COG1207">
    <property type="taxonomic scope" value="Bacteria"/>
</dbReference>
<dbReference type="UniPathway" id="UPA00113">
    <property type="reaction ID" value="UER00532"/>
</dbReference>
<dbReference type="UniPathway" id="UPA00113">
    <property type="reaction ID" value="UER00533"/>
</dbReference>
<dbReference type="UniPathway" id="UPA00973"/>
<dbReference type="Proteomes" id="UP000001225">
    <property type="component" value="Chromosome"/>
</dbReference>
<dbReference type="GO" id="GO:0005737">
    <property type="term" value="C:cytoplasm"/>
    <property type="evidence" value="ECO:0007669"/>
    <property type="project" value="UniProtKB-SubCell"/>
</dbReference>
<dbReference type="GO" id="GO:0016020">
    <property type="term" value="C:membrane"/>
    <property type="evidence" value="ECO:0007669"/>
    <property type="project" value="GOC"/>
</dbReference>
<dbReference type="GO" id="GO:0019134">
    <property type="term" value="F:glucosamine-1-phosphate N-acetyltransferase activity"/>
    <property type="evidence" value="ECO:0007669"/>
    <property type="project" value="UniProtKB-UniRule"/>
</dbReference>
<dbReference type="GO" id="GO:0000287">
    <property type="term" value="F:magnesium ion binding"/>
    <property type="evidence" value="ECO:0007669"/>
    <property type="project" value="UniProtKB-UniRule"/>
</dbReference>
<dbReference type="GO" id="GO:0003977">
    <property type="term" value="F:UDP-N-acetylglucosamine diphosphorylase activity"/>
    <property type="evidence" value="ECO:0007669"/>
    <property type="project" value="UniProtKB-UniRule"/>
</dbReference>
<dbReference type="GO" id="GO:0000902">
    <property type="term" value="P:cell morphogenesis"/>
    <property type="evidence" value="ECO:0007669"/>
    <property type="project" value="UniProtKB-UniRule"/>
</dbReference>
<dbReference type="GO" id="GO:0071555">
    <property type="term" value="P:cell wall organization"/>
    <property type="evidence" value="ECO:0007669"/>
    <property type="project" value="UniProtKB-KW"/>
</dbReference>
<dbReference type="GO" id="GO:0009245">
    <property type="term" value="P:lipid A biosynthetic process"/>
    <property type="evidence" value="ECO:0007669"/>
    <property type="project" value="UniProtKB-UniRule"/>
</dbReference>
<dbReference type="GO" id="GO:0009252">
    <property type="term" value="P:peptidoglycan biosynthetic process"/>
    <property type="evidence" value="ECO:0007669"/>
    <property type="project" value="UniProtKB-UniRule"/>
</dbReference>
<dbReference type="GO" id="GO:0008360">
    <property type="term" value="P:regulation of cell shape"/>
    <property type="evidence" value="ECO:0007669"/>
    <property type="project" value="UniProtKB-KW"/>
</dbReference>
<dbReference type="GO" id="GO:0006048">
    <property type="term" value="P:UDP-N-acetylglucosamine biosynthetic process"/>
    <property type="evidence" value="ECO:0007669"/>
    <property type="project" value="UniProtKB-UniPathway"/>
</dbReference>
<dbReference type="CDD" id="cd02540">
    <property type="entry name" value="GT2_GlmU_N_bac"/>
    <property type="match status" value="1"/>
</dbReference>
<dbReference type="CDD" id="cd03353">
    <property type="entry name" value="LbH_GlmU_C"/>
    <property type="match status" value="1"/>
</dbReference>
<dbReference type="Gene3D" id="2.160.10.10">
    <property type="entry name" value="Hexapeptide repeat proteins"/>
    <property type="match status" value="1"/>
</dbReference>
<dbReference type="Gene3D" id="3.90.550.10">
    <property type="entry name" value="Spore Coat Polysaccharide Biosynthesis Protein SpsA, Chain A"/>
    <property type="match status" value="1"/>
</dbReference>
<dbReference type="HAMAP" id="MF_01631">
    <property type="entry name" value="GlmU"/>
    <property type="match status" value="1"/>
</dbReference>
<dbReference type="InterPro" id="IPR005882">
    <property type="entry name" value="Bifunctional_GlmU"/>
</dbReference>
<dbReference type="InterPro" id="IPR050065">
    <property type="entry name" value="GlmU-like"/>
</dbReference>
<dbReference type="InterPro" id="IPR038009">
    <property type="entry name" value="GlmU_C_LbH"/>
</dbReference>
<dbReference type="InterPro" id="IPR001451">
    <property type="entry name" value="Hexapep"/>
</dbReference>
<dbReference type="InterPro" id="IPR018357">
    <property type="entry name" value="Hexapep_transf_CS"/>
</dbReference>
<dbReference type="InterPro" id="IPR025877">
    <property type="entry name" value="MobA-like_NTP_Trfase"/>
</dbReference>
<dbReference type="InterPro" id="IPR029044">
    <property type="entry name" value="Nucleotide-diphossugar_trans"/>
</dbReference>
<dbReference type="InterPro" id="IPR011004">
    <property type="entry name" value="Trimer_LpxA-like_sf"/>
</dbReference>
<dbReference type="NCBIfam" id="TIGR01173">
    <property type="entry name" value="glmU"/>
    <property type="match status" value="1"/>
</dbReference>
<dbReference type="PANTHER" id="PTHR43584:SF3">
    <property type="entry name" value="BIFUNCTIONAL PROTEIN GLMU"/>
    <property type="match status" value="1"/>
</dbReference>
<dbReference type="PANTHER" id="PTHR43584">
    <property type="entry name" value="NUCLEOTIDYL TRANSFERASE"/>
    <property type="match status" value="1"/>
</dbReference>
<dbReference type="Pfam" id="PF00132">
    <property type="entry name" value="Hexapep"/>
    <property type="match status" value="2"/>
</dbReference>
<dbReference type="Pfam" id="PF12804">
    <property type="entry name" value="NTP_transf_3"/>
    <property type="match status" value="1"/>
</dbReference>
<dbReference type="SUPFAM" id="SSF53448">
    <property type="entry name" value="Nucleotide-diphospho-sugar transferases"/>
    <property type="match status" value="1"/>
</dbReference>
<dbReference type="SUPFAM" id="SSF51161">
    <property type="entry name" value="Trimeric LpxA-like enzymes"/>
    <property type="match status" value="1"/>
</dbReference>
<dbReference type="PROSITE" id="PS00101">
    <property type="entry name" value="HEXAPEP_TRANSFERASES"/>
    <property type="match status" value="1"/>
</dbReference>
<protein>
    <recommendedName>
        <fullName evidence="1">Bifunctional protein GlmU</fullName>
    </recommendedName>
    <domain>
        <recommendedName>
            <fullName evidence="1">UDP-N-acetylglucosamine pyrophosphorylase</fullName>
            <ecNumber evidence="1">2.7.7.23</ecNumber>
        </recommendedName>
        <alternativeName>
            <fullName evidence="1">N-acetylglucosamine-1-phosphate uridyltransferase</fullName>
        </alternativeName>
    </domain>
    <domain>
        <recommendedName>
            <fullName evidence="1">Glucosamine-1-phosphate N-acetyltransferase</fullName>
            <ecNumber evidence="1">2.3.1.157</ecNumber>
        </recommendedName>
    </domain>
</protein>
<name>GLMU_BORPD</name>